<gene>
    <name type="ordered locus">GbCGDNIH1_1393</name>
</gene>
<keyword id="KW-1185">Reference proteome</keyword>
<name>Y1393_GRABC</name>
<proteinExistence type="inferred from homology"/>
<accession>Q0BSB1</accession>
<comment type="similarity">
    <text evidence="1">Belongs to the UPF0262 family.</text>
</comment>
<sequence>MSAKQDDTQPIQAASKRLLKVILEGEALTRLSPLQEMDRAQAVADLEAENVFSLERPLPGMTPVSEQGPYVLHLSIQEGRLIFDIRRQDDTFLTVLALALGPFRRLIKDYHLLVDSYVKAVQEAREARIQAIDMGRRGLHNEGAELMRHRLNGKISIDFETARRLFTLVCVLHQRI</sequence>
<evidence type="ECO:0000255" key="1">
    <source>
        <dbReference type="HAMAP-Rule" id="MF_00678"/>
    </source>
</evidence>
<protein>
    <recommendedName>
        <fullName evidence="1">UPF0262 protein GbCGDNIH1_1393</fullName>
    </recommendedName>
</protein>
<organism>
    <name type="scientific">Granulibacter bethesdensis (strain ATCC BAA-1260 / CGDNIH1)</name>
    <dbReference type="NCBI Taxonomy" id="391165"/>
    <lineage>
        <taxon>Bacteria</taxon>
        <taxon>Pseudomonadati</taxon>
        <taxon>Pseudomonadota</taxon>
        <taxon>Alphaproteobacteria</taxon>
        <taxon>Acetobacterales</taxon>
        <taxon>Acetobacteraceae</taxon>
        <taxon>Granulibacter</taxon>
    </lineage>
</organism>
<feature type="chain" id="PRO_0000314194" description="UPF0262 protein GbCGDNIH1_1393">
    <location>
        <begin position="1"/>
        <end position="176"/>
    </location>
</feature>
<reference key="1">
    <citation type="journal article" date="2007" name="J. Bacteriol.">
        <title>Genome sequence analysis of the emerging human pathogenic acetic acid bacterium Granulibacter bethesdensis.</title>
        <authorList>
            <person name="Greenberg D.E."/>
            <person name="Porcella S.F."/>
            <person name="Zelazny A.M."/>
            <person name="Virtaneva K."/>
            <person name="Sturdevant D.E."/>
            <person name="Kupko J.J. III"/>
            <person name="Barbian K.D."/>
            <person name="Babar A."/>
            <person name="Dorward D.W."/>
            <person name="Holland S.M."/>
        </authorList>
    </citation>
    <scope>NUCLEOTIDE SEQUENCE [LARGE SCALE GENOMIC DNA]</scope>
    <source>
        <strain>ATCC BAA-1260 / CGDNIH1</strain>
    </source>
</reference>
<dbReference type="EMBL" id="CP000394">
    <property type="protein sequence ID" value="ABI62291.1"/>
    <property type="molecule type" value="Genomic_DNA"/>
</dbReference>
<dbReference type="RefSeq" id="WP_011632095.1">
    <property type="nucleotide sequence ID" value="NC_008343.2"/>
</dbReference>
<dbReference type="STRING" id="391165.GbCGDNIH1_1393"/>
<dbReference type="GeneID" id="69745637"/>
<dbReference type="KEGG" id="gbe:GbCGDNIH1_1393"/>
<dbReference type="eggNOG" id="COG5328">
    <property type="taxonomic scope" value="Bacteria"/>
</dbReference>
<dbReference type="HOGENOM" id="CLU_112904_0_0_5"/>
<dbReference type="OrthoDB" id="9798434at2"/>
<dbReference type="Proteomes" id="UP000001963">
    <property type="component" value="Chromosome"/>
</dbReference>
<dbReference type="HAMAP" id="MF_00678">
    <property type="entry name" value="UPF0262"/>
    <property type="match status" value="1"/>
</dbReference>
<dbReference type="InterPro" id="IPR008321">
    <property type="entry name" value="UCP032146"/>
</dbReference>
<dbReference type="NCBIfam" id="NF002769">
    <property type="entry name" value="PRK02853.1"/>
    <property type="match status" value="1"/>
</dbReference>
<dbReference type="Pfam" id="PF06793">
    <property type="entry name" value="UPF0262"/>
    <property type="match status" value="1"/>
</dbReference>